<sequence length="877" mass="97863">MAAERYNPRVAEAHWQKVWEENRTFETDNSDSREKYYVLEMFPYPSGRIHMGHVRNYAMGDVVARYKRAKGFNVLHPMGWDAFGMPAENAAMQNKVHPKEWTYQNIATMKRQLKSMGLSLDWSREFATCDVEYYHRQQMLFIDLYEKGLVTRKTSKVNWDPVDNTVLANEQVVDGRGWRSGALVEQRELTQWFFKITDFSEELLAGLDTLDQWPEKVRLMQRNWIGKSEGLQVRFALAAGTAPAGFSEVEVYTTRPDTLFGAAFVAISADHPLAKKLSEGNAALSSFIEECHQQGTSLAALETAEKKGFDTGIKVKHPFDDNWELPVYVANFVLMEYGTGAVFGCPAHDQRDLDFANKYKLKVTPVVLPKGEDAASFSIGETAYTDDGVMINSRFLDGMTPEAAFNEVASRLEKTDLVGRPQAVRKVQFRLRDWGISRQRYWGCPIPMIHCESCGVNPVPRADLPVKLPDDVEFDRPGNPLDRHATWRHVKCPKCGGDARRETDTMDTFVDSSWYYTRFTAPWENEPTDRKAADHWLPVDQYIGGIEHAILHLLYSRFFTRAMKVAGHVGVDEPFKGLFTQGMVVHETYKANGQWVSPADIRIEEIDGKRVATMLDSGAPVEIGSIEKMSKSKKNVVDPDDIIASYGADTARWFVLSDSPPERDVIWTEAGAEGAHRFVQRIWRLVAEAAPALKDVAPKAGTQGEALGVSKAAHKAVKAVGDDIEKLAFNRGVARLYELVNTLSGALQQAADGKADAEMKGALREATEMLVLMTAPMMPHLAEQCLAELGGKVAGKETLVARAPWPVFDPALVVENEIVLPVQINGKKRGDLTIARDADQASIQQAVLELDFVKAALNGGSPKKIIVVPQRIVNVVA</sequence>
<comment type="catalytic activity">
    <reaction evidence="1">
        <text>tRNA(Leu) + L-leucine + ATP = L-leucyl-tRNA(Leu) + AMP + diphosphate</text>
        <dbReference type="Rhea" id="RHEA:11688"/>
        <dbReference type="Rhea" id="RHEA-COMP:9613"/>
        <dbReference type="Rhea" id="RHEA-COMP:9622"/>
        <dbReference type="ChEBI" id="CHEBI:30616"/>
        <dbReference type="ChEBI" id="CHEBI:33019"/>
        <dbReference type="ChEBI" id="CHEBI:57427"/>
        <dbReference type="ChEBI" id="CHEBI:78442"/>
        <dbReference type="ChEBI" id="CHEBI:78494"/>
        <dbReference type="ChEBI" id="CHEBI:456215"/>
        <dbReference type="EC" id="6.1.1.4"/>
    </reaction>
</comment>
<comment type="subcellular location">
    <subcellularLocation>
        <location evidence="1">Cytoplasm</location>
    </subcellularLocation>
</comment>
<comment type="similarity">
    <text evidence="1">Belongs to the class-I aminoacyl-tRNA synthetase family.</text>
</comment>
<comment type="sequence caution" evidence="2">
    <conflict type="erroneous initiation">
        <sequence resource="EMBL-CDS" id="ABQ61550"/>
    </conflict>
</comment>
<protein>
    <recommendedName>
        <fullName evidence="1">Leucine--tRNA ligase</fullName>
        <ecNumber evidence="1">6.1.1.4</ecNumber>
    </recommendedName>
    <alternativeName>
        <fullName evidence="1">Leucyl-tRNA synthetase</fullName>
        <shortName evidence="1">LeuRS</shortName>
    </alternativeName>
</protein>
<organism>
    <name type="scientific">Brucella ovis (strain ATCC 25840 / 63/290 / NCTC 10512)</name>
    <dbReference type="NCBI Taxonomy" id="444178"/>
    <lineage>
        <taxon>Bacteria</taxon>
        <taxon>Pseudomonadati</taxon>
        <taxon>Pseudomonadota</taxon>
        <taxon>Alphaproteobacteria</taxon>
        <taxon>Hyphomicrobiales</taxon>
        <taxon>Brucellaceae</taxon>
        <taxon>Brucella/Ochrobactrum group</taxon>
        <taxon>Brucella</taxon>
    </lineage>
</organism>
<dbReference type="EC" id="6.1.1.4" evidence="1"/>
<dbReference type="EMBL" id="CP000708">
    <property type="protein sequence ID" value="ABQ61550.1"/>
    <property type="status" value="ALT_INIT"/>
    <property type="molecule type" value="Genomic_DNA"/>
</dbReference>
<dbReference type="RefSeq" id="WP_002967933.1">
    <property type="nucleotide sequence ID" value="NC_009505.1"/>
</dbReference>
<dbReference type="SMR" id="A5VSE9"/>
<dbReference type="GeneID" id="97533068"/>
<dbReference type="KEGG" id="bov:BOV_1740"/>
<dbReference type="HOGENOM" id="CLU_004427_0_0_5"/>
<dbReference type="PhylomeDB" id="A5VSE9"/>
<dbReference type="Proteomes" id="UP000006383">
    <property type="component" value="Chromosome I"/>
</dbReference>
<dbReference type="GO" id="GO:0005829">
    <property type="term" value="C:cytosol"/>
    <property type="evidence" value="ECO:0007669"/>
    <property type="project" value="TreeGrafter"/>
</dbReference>
<dbReference type="GO" id="GO:0002161">
    <property type="term" value="F:aminoacyl-tRNA deacylase activity"/>
    <property type="evidence" value="ECO:0007669"/>
    <property type="project" value="InterPro"/>
</dbReference>
<dbReference type="GO" id="GO:0005524">
    <property type="term" value="F:ATP binding"/>
    <property type="evidence" value="ECO:0007669"/>
    <property type="project" value="UniProtKB-UniRule"/>
</dbReference>
<dbReference type="GO" id="GO:0004823">
    <property type="term" value="F:leucine-tRNA ligase activity"/>
    <property type="evidence" value="ECO:0007669"/>
    <property type="project" value="UniProtKB-UniRule"/>
</dbReference>
<dbReference type="GO" id="GO:0006429">
    <property type="term" value="P:leucyl-tRNA aminoacylation"/>
    <property type="evidence" value="ECO:0007669"/>
    <property type="project" value="UniProtKB-UniRule"/>
</dbReference>
<dbReference type="CDD" id="cd07958">
    <property type="entry name" value="Anticodon_Ia_Leu_BEm"/>
    <property type="match status" value="1"/>
</dbReference>
<dbReference type="CDD" id="cd00812">
    <property type="entry name" value="LeuRS_core"/>
    <property type="match status" value="1"/>
</dbReference>
<dbReference type="FunFam" id="1.10.730.10:FF:000002">
    <property type="entry name" value="Leucine--tRNA ligase"/>
    <property type="match status" value="1"/>
</dbReference>
<dbReference type="FunFam" id="3.40.50.620:FF:000003">
    <property type="entry name" value="Leucine--tRNA ligase"/>
    <property type="match status" value="1"/>
</dbReference>
<dbReference type="Gene3D" id="2.20.28.290">
    <property type="match status" value="1"/>
</dbReference>
<dbReference type="Gene3D" id="3.10.20.590">
    <property type="match status" value="1"/>
</dbReference>
<dbReference type="Gene3D" id="3.40.50.620">
    <property type="entry name" value="HUPs"/>
    <property type="match status" value="2"/>
</dbReference>
<dbReference type="Gene3D" id="1.10.730.10">
    <property type="entry name" value="Isoleucyl-tRNA Synthetase, Domain 1"/>
    <property type="match status" value="1"/>
</dbReference>
<dbReference type="Gene3D" id="3.90.740.10">
    <property type="entry name" value="Valyl/Leucyl/Isoleucyl-tRNA synthetase, editing domain"/>
    <property type="match status" value="1"/>
</dbReference>
<dbReference type="HAMAP" id="MF_00049_B">
    <property type="entry name" value="Leu_tRNA_synth_B"/>
    <property type="match status" value="1"/>
</dbReference>
<dbReference type="InterPro" id="IPR001412">
    <property type="entry name" value="aa-tRNA-synth_I_CS"/>
</dbReference>
<dbReference type="InterPro" id="IPR002300">
    <property type="entry name" value="aa-tRNA-synth_Ia"/>
</dbReference>
<dbReference type="InterPro" id="IPR002302">
    <property type="entry name" value="Leu-tRNA-ligase"/>
</dbReference>
<dbReference type="InterPro" id="IPR025709">
    <property type="entry name" value="Leu_tRNA-synth_edit"/>
</dbReference>
<dbReference type="InterPro" id="IPR013155">
    <property type="entry name" value="M/V/L/I-tRNA-synth_anticd-bd"/>
</dbReference>
<dbReference type="InterPro" id="IPR015413">
    <property type="entry name" value="Methionyl/Leucyl_tRNA_Synth"/>
</dbReference>
<dbReference type="InterPro" id="IPR014729">
    <property type="entry name" value="Rossmann-like_a/b/a_fold"/>
</dbReference>
<dbReference type="InterPro" id="IPR009080">
    <property type="entry name" value="tRNAsynth_Ia_anticodon-bd"/>
</dbReference>
<dbReference type="InterPro" id="IPR009008">
    <property type="entry name" value="Val/Leu/Ile-tRNA-synth_edit"/>
</dbReference>
<dbReference type="NCBIfam" id="TIGR00396">
    <property type="entry name" value="leuS_bact"/>
    <property type="match status" value="1"/>
</dbReference>
<dbReference type="PANTHER" id="PTHR43740:SF2">
    <property type="entry name" value="LEUCINE--TRNA LIGASE, MITOCHONDRIAL"/>
    <property type="match status" value="1"/>
</dbReference>
<dbReference type="PANTHER" id="PTHR43740">
    <property type="entry name" value="LEUCYL-TRNA SYNTHETASE"/>
    <property type="match status" value="1"/>
</dbReference>
<dbReference type="Pfam" id="PF08264">
    <property type="entry name" value="Anticodon_1"/>
    <property type="match status" value="1"/>
</dbReference>
<dbReference type="Pfam" id="PF00133">
    <property type="entry name" value="tRNA-synt_1"/>
    <property type="match status" value="2"/>
</dbReference>
<dbReference type="Pfam" id="PF13603">
    <property type="entry name" value="tRNA-synt_1_2"/>
    <property type="match status" value="1"/>
</dbReference>
<dbReference type="Pfam" id="PF09334">
    <property type="entry name" value="tRNA-synt_1g"/>
    <property type="match status" value="1"/>
</dbReference>
<dbReference type="PRINTS" id="PR00985">
    <property type="entry name" value="TRNASYNTHLEU"/>
</dbReference>
<dbReference type="SUPFAM" id="SSF47323">
    <property type="entry name" value="Anticodon-binding domain of a subclass of class I aminoacyl-tRNA synthetases"/>
    <property type="match status" value="1"/>
</dbReference>
<dbReference type="SUPFAM" id="SSF52374">
    <property type="entry name" value="Nucleotidylyl transferase"/>
    <property type="match status" value="1"/>
</dbReference>
<dbReference type="SUPFAM" id="SSF50677">
    <property type="entry name" value="ValRS/IleRS/LeuRS editing domain"/>
    <property type="match status" value="1"/>
</dbReference>
<dbReference type="PROSITE" id="PS00178">
    <property type="entry name" value="AA_TRNA_LIGASE_I"/>
    <property type="match status" value="1"/>
</dbReference>
<keyword id="KW-0030">Aminoacyl-tRNA synthetase</keyword>
<keyword id="KW-0067">ATP-binding</keyword>
<keyword id="KW-0963">Cytoplasm</keyword>
<keyword id="KW-0436">Ligase</keyword>
<keyword id="KW-0547">Nucleotide-binding</keyword>
<keyword id="KW-0648">Protein biosynthesis</keyword>
<name>SYL_BRUO2</name>
<feature type="chain" id="PRO_0000334734" description="Leucine--tRNA ligase">
    <location>
        <begin position="1"/>
        <end position="877"/>
    </location>
</feature>
<feature type="short sequence motif" description="'HIGH' region">
    <location>
        <begin position="43"/>
        <end position="53"/>
    </location>
</feature>
<feature type="short sequence motif" description="'KMSKS' region">
    <location>
        <begin position="628"/>
        <end position="632"/>
    </location>
</feature>
<feature type="binding site" evidence="1">
    <location>
        <position position="631"/>
    </location>
    <ligand>
        <name>ATP</name>
        <dbReference type="ChEBI" id="CHEBI:30616"/>
    </ligand>
</feature>
<accession>A5VSE9</accession>
<reference key="1">
    <citation type="journal article" date="2009" name="PLoS ONE">
        <title>Genome degradation in Brucella ovis corresponds with narrowing of its host range and tissue tropism.</title>
        <authorList>
            <person name="Tsolis R.M."/>
            <person name="Seshadri R."/>
            <person name="Santos R.L."/>
            <person name="Sangari F.J."/>
            <person name="Lobo J.M."/>
            <person name="de Jong M.F."/>
            <person name="Ren Q."/>
            <person name="Myers G."/>
            <person name="Brinkac L.M."/>
            <person name="Nelson W.C."/>
            <person name="Deboy R.T."/>
            <person name="Angiuoli S."/>
            <person name="Khouri H."/>
            <person name="Dimitrov G."/>
            <person name="Robinson J.R."/>
            <person name="Mulligan S."/>
            <person name="Walker R.L."/>
            <person name="Elzer P.E."/>
            <person name="Hassan K.A."/>
            <person name="Paulsen I.T."/>
        </authorList>
    </citation>
    <scope>NUCLEOTIDE SEQUENCE [LARGE SCALE GENOMIC DNA]</scope>
    <source>
        <strain>ATCC 25840 / 63/290 / NCTC 10512</strain>
    </source>
</reference>
<evidence type="ECO:0000255" key="1">
    <source>
        <dbReference type="HAMAP-Rule" id="MF_00049"/>
    </source>
</evidence>
<evidence type="ECO:0000305" key="2"/>
<proteinExistence type="inferred from homology"/>
<gene>
    <name evidence="1" type="primary">leuS</name>
    <name type="ordered locus">BOV_1740</name>
</gene>